<feature type="chain" id="PRO_0000083227" description="Movement protein">
    <location>
        <begin position="1"/>
        <end position="300"/>
    </location>
</feature>
<name>MVP_AMV</name>
<organism>
    <name type="scientific">Alfalfa mosaic virus</name>
    <name type="common">AMV</name>
    <dbReference type="NCBI Taxonomy" id="12321"/>
    <lineage>
        <taxon>Viruses</taxon>
        <taxon>Riboviria</taxon>
        <taxon>Orthornavirae</taxon>
        <taxon>Kitrinoviricota</taxon>
        <taxon>Alsuviricetes</taxon>
        <taxon>Martellivirales</taxon>
        <taxon>Bromoviridae</taxon>
        <taxon>Alfamovirus</taxon>
    </lineage>
</organism>
<gene>
    <name type="ORF">ORF3a</name>
</gene>
<protein>
    <recommendedName>
        <fullName>Movement protein</fullName>
        <shortName>MP</shortName>
    </recommendedName>
    <alternativeName>
        <fullName>Protein 3A</fullName>
    </alternativeName>
</protein>
<sequence>MENTKTNASSSGMSSSSSFSVSYAEEMLLADEVSKINSMSILGPNQLKLCTQLVLSNGAAPVVLSLVSKEKKSILNRMLPKIGQRMYVHHSAIYLLYMPNILKSSSGSITLKLFNEATGELVDVDTDHDATQACIFAGRYPRSILAKDAAKGHDLKLVVHAVASTNANSAVGVLYPIWEDELSRKQILERGADFLKFPIAETEPVRDLLNAGKLTDFVLDRTRLGVGSKNDPSPVLLEPRAKITGKAKTVFIPEGPSVPNTTINGMAPTVRIDAGSPKGLGVPKGFTYESFIKDEILPDH</sequence>
<keyword id="KW-1031">Host cell junction</keyword>
<keyword id="KW-1185">Reference proteome</keyword>
<keyword id="KW-0813">Transport</keyword>
<keyword id="KW-0916">Viral movement protein</keyword>
<dbReference type="EMBL" id="K02703">
    <property type="protein sequence ID" value="AAA46291.1"/>
    <property type="molecule type" value="Genomic_RNA"/>
</dbReference>
<dbReference type="PIR" id="A04203">
    <property type="entry name" value="WMFM32"/>
</dbReference>
<dbReference type="RefSeq" id="NP_041194.1">
    <property type="nucleotide sequence ID" value="NC_002025.1"/>
</dbReference>
<dbReference type="KEGG" id="vg:962669"/>
<dbReference type="Proteomes" id="UP000000358">
    <property type="component" value="Genome"/>
</dbReference>
<dbReference type="GO" id="GO:0044219">
    <property type="term" value="C:host cell plasmodesma"/>
    <property type="evidence" value="ECO:0007669"/>
    <property type="project" value="UniProtKB-SubCell"/>
</dbReference>
<dbReference type="GO" id="GO:0046740">
    <property type="term" value="P:transport of virus in host, cell to cell"/>
    <property type="evidence" value="ECO:0007669"/>
    <property type="project" value="UniProtKB-KW"/>
</dbReference>
<dbReference type="InterPro" id="IPR002538">
    <property type="entry name" value="Bromo_MP"/>
</dbReference>
<dbReference type="Pfam" id="PF01573">
    <property type="entry name" value="Bromo_MP"/>
    <property type="match status" value="1"/>
</dbReference>
<evidence type="ECO:0000250" key="1"/>
<evidence type="ECO:0000305" key="2"/>
<reference key="1">
    <citation type="journal article" date="1983" name="Nucleic Acids Res.">
        <title>Complete nucleotide sequence of alfalfa mosaic virus RNA3.</title>
        <authorList>
            <person name="Barker R.F."/>
            <person name="Jarvis N.P."/>
            <person name="Thompson D.V."/>
            <person name="Loesch-Fries L.S."/>
            <person name="Hall T.C."/>
        </authorList>
    </citation>
    <scope>NUCLEOTIDE SEQUENCE [GENOMIC RNA]</scope>
    <source>
        <strain>425/Madison</strain>
    </source>
</reference>
<proteinExistence type="inferred from homology"/>
<comment type="function">
    <text evidence="1">Transports viral genome to neighboring plant cells directly through plasmosdesmata, without any budding. The movement protein allows efficient cell to cell propagation, by bypassing the host cell wall barrier. Acts by forming a tubular structure at the host plasmodesmata, enlarging it enough to allow free passage of virion capsids (By similarity).</text>
</comment>
<comment type="subcellular location">
    <subcellularLocation>
        <location evidence="1">Host cell junction</location>
        <location evidence="1">Host plasmodesma</location>
    </subcellularLocation>
    <text evidence="1">Assembles into long tubular structures at the surface of the infected protoplast.</text>
</comment>
<comment type="similarity">
    <text evidence="2">Belongs to the alfamovirus movement protein family.</text>
</comment>
<accession>P05672</accession>